<gene>
    <name evidence="5 6" type="primary">Or56b34</name>
    <name evidence="6" type="synonym">Olfr688</name>
</gene>
<reference evidence="5" key="1">
    <citation type="journal article" date="2003" name="Genome Biol.">
        <title>Odorant receptor expressed sequence tags demonstrate olfactory expression of over 400 genes, extensive alternate splicing and unequal expression levels.</title>
        <authorList>
            <person name="Young J.M."/>
            <person name="Shykind B.M."/>
            <person name="Lane R.P."/>
            <person name="Tonnes-Priddy L."/>
            <person name="Ross J.A."/>
            <person name="Walker M."/>
            <person name="Williams E.M."/>
            <person name="Trask B.J."/>
        </authorList>
    </citation>
    <scope>NUCLEOTIDE SEQUENCE [GENOMIC DNA]</scope>
</reference>
<reference key="2">
    <citation type="journal article" date="2009" name="PLoS Biol.">
        <title>Lineage-specific biology revealed by a finished genome assembly of the mouse.</title>
        <authorList>
            <person name="Church D.M."/>
            <person name="Goodstadt L."/>
            <person name="Hillier L.W."/>
            <person name="Zody M.C."/>
            <person name="Goldstein S."/>
            <person name="She X."/>
            <person name="Bult C.J."/>
            <person name="Agarwala R."/>
            <person name="Cherry J.L."/>
            <person name="DiCuccio M."/>
            <person name="Hlavina W."/>
            <person name="Kapustin Y."/>
            <person name="Meric P."/>
            <person name="Maglott D."/>
            <person name="Birtle Z."/>
            <person name="Marques A.C."/>
            <person name="Graves T."/>
            <person name="Zhou S."/>
            <person name="Teague B."/>
            <person name="Potamousis K."/>
            <person name="Churas C."/>
            <person name="Place M."/>
            <person name="Herschleb J."/>
            <person name="Runnheim R."/>
            <person name="Forrest D."/>
            <person name="Amos-Landgraf J."/>
            <person name="Schwartz D.C."/>
            <person name="Cheng Z."/>
            <person name="Lindblad-Toh K."/>
            <person name="Eichler E.E."/>
            <person name="Ponting C.P."/>
        </authorList>
    </citation>
    <scope>NUCLEOTIDE SEQUENCE [LARGE SCALE GENOMIC DNA]</scope>
    <source>
        <strain>C57BL/6J</strain>
    </source>
</reference>
<organism>
    <name type="scientific">Mus musculus</name>
    <name type="common">Mouse</name>
    <dbReference type="NCBI Taxonomy" id="10090"/>
    <lineage>
        <taxon>Eukaryota</taxon>
        <taxon>Metazoa</taxon>
        <taxon>Chordata</taxon>
        <taxon>Craniata</taxon>
        <taxon>Vertebrata</taxon>
        <taxon>Euteleostomi</taxon>
        <taxon>Mammalia</taxon>
        <taxon>Eutheria</taxon>
        <taxon>Euarchontoglires</taxon>
        <taxon>Glires</taxon>
        <taxon>Rodentia</taxon>
        <taxon>Myomorpha</taxon>
        <taxon>Muroidea</taxon>
        <taxon>Muridae</taxon>
        <taxon>Murinae</taxon>
        <taxon>Mus</taxon>
        <taxon>Mus</taxon>
    </lineage>
</organism>
<feature type="chain" id="PRO_0000409662" description="Olfactory receptor 56B34">
    <location>
        <begin position="1"/>
        <end position="321"/>
    </location>
</feature>
<feature type="topological domain" description="Extracellular" evidence="1">
    <location>
        <begin position="1"/>
        <end position="36"/>
    </location>
</feature>
<feature type="transmembrane region" description="Helical; Name=1" evidence="1">
    <location>
        <begin position="37"/>
        <end position="57"/>
    </location>
</feature>
<feature type="topological domain" description="Cytoplasmic" evidence="1">
    <location>
        <begin position="58"/>
        <end position="70"/>
    </location>
</feature>
<feature type="transmembrane region" description="Helical; Name=2" evidence="1">
    <location>
        <begin position="71"/>
        <end position="91"/>
    </location>
</feature>
<feature type="topological domain" description="Extracellular" evidence="1">
    <location>
        <begin position="92"/>
        <end position="105"/>
    </location>
</feature>
<feature type="transmembrane region" description="Helical; Name=3" evidence="1">
    <location>
        <begin position="106"/>
        <end position="126"/>
    </location>
</feature>
<feature type="topological domain" description="Cytoplasmic" evidence="1">
    <location>
        <begin position="127"/>
        <end position="128"/>
    </location>
</feature>
<feature type="transmembrane region" description="Helical; Name=4" evidence="1">
    <location>
        <begin position="129"/>
        <end position="149"/>
    </location>
</feature>
<feature type="topological domain" description="Extracellular" evidence="1">
    <location>
        <begin position="150"/>
        <end position="207"/>
    </location>
</feature>
<feature type="transmembrane region" description="Helical; Name=5" evidence="1">
    <location>
        <begin position="208"/>
        <end position="228"/>
    </location>
</feature>
<feature type="topological domain" description="Cytoplasmic" evidence="1">
    <location>
        <begin position="229"/>
        <end position="250"/>
    </location>
</feature>
<feature type="transmembrane region" description="Helical; Name=6" evidence="1">
    <location>
        <begin position="251"/>
        <end position="271"/>
    </location>
</feature>
<feature type="topological domain" description="Extracellular" evidence="1">
    <location>
        <begin position="272"/>
        <end position="275"/>
    </location>
</feature>
<feature type="transmembrane region" description="Helical; Name=7" evidence="1">
    <location>
        <begin position="276"/>
        <end position="296"/>
    </location>
</feature>
<feature type="topological domain" description="Cytoplasmic" evidence="1">
    <location>
        <begin position="297"/>
        <end position="321"/>
    </location>
</feature>
<feature type="disulfide bond" evidence="2">
    <location>
        <begin position="103"/>
        <end position="185"/>
    </location>
</feature>
<proteinExistence type="inferred from homology"/>
<accession>Q6W049</accession>
<accession>E9PVA1</accession>
<name>56B34_MOUSE</name>
<protein>
    <recommendedName>
        <fullName evidence="4">Olfactory receptor 56B34</fullName>
    </recommendedName>
    <alternativeName>
        <fullName evidence="5">Olfactory receptor 688</fullName>
    </alternativeName>
</protein>
<keyword id="KW-1003">Cell membrane</keyword>
<keyword id="KW-1015">Disulfide bond</keyword>
<keyword id="KW-0297">G-protein coupled receptor</keyword>
<keyword id="KW-0472">Membrane</keyword>
<keyword id="KW-0552">Olfaction</keyword>
<keyword id="KW-0675">Receptor</keyword>
<keyword id="KW-1185">Reference proteome</keyword>
<keyword id="KW-0716">Sensory transduction</keyword>
<keyword id="KW-0807">Transducer</keyword>
<keyword id="KW-0812">Transmembrane</keyword>
<keyword id="KW-1133">Transmembrane helix</keyword>
<dbReference type="EMBL" id="AY317809">
    <property type="protein sequence ID" value="AAS99798.1"/>
    <property type="status" value="ALT_SEQ"/>
    <property type="molecule type" value="Genomic_DNA"/>
</dbReference>
<dbReference type="EMBL" id="AC122523">
    <property type="status" value="NOT_ANNOTATED_CDS"/>
    <property type="molecule type" value="Genomic_DNA"/>
</dbReference>
<dbReference type="CCDS" id="CCDS52348.1"/>
<dbReference type="RefSeq" id="NP_001011533.2">
    <property type="nucleotide sequence ID" value="NM_001011533.2"/>
</dbReference>
<dbReference type="SMR" id="Q6W049"/>
<dbReference type="FunCoup" id="Q6W049">
    <property type="interactions" value="1370"/>
</dbReference>
<dbReference type="STRING" id="10090.ENSMUSP00000095758"/>
<dbReference type="iPTMnet" id="Q6W049"/>
<dbReference type="PhosphoSitePlus" id="Q6W049"/>
<dbReference type="PaxDb" id="10090-ENSMUSP00000095758"/>
<dbReference type="Ensembl" id="ENSMUST00000098155.3">
    <property type="protein sequence ID" value="ENSMUSP00000095758.3"/>
    <property type="gene ID" value="ENSMUSG00000073909.3"/>
</dbReference>
<dbReference type="GeneID" id="259161"/>
<dbReference type="KEGG" id="mmu:259161"/>
<dbReference type="UCSC" id="uc009ixt.1">
    <property type="organism name" value="mouse"/>
</dbReference>
<dbReference type="AGR" id="MGI:3030522"/>
<dbReference type="CTD" id="259161"/>
<dbReference type="MGI" id="MGI:3030522">
    <property type="gene designation" value="Or56b34"/>
</dbReference>
<dbReference type="VEuPathDB" id="HostDB:ENSMUSG00000073909"/>
<dbReference type="eggNOG" id="ENOG502SJUD">
    <property type="taxonomic scope" value="Eukaryota"/>
</dbReference>
<dbReference type="GeneTree" id="ENSGT01130000278289"/>
<dbReference type="HOGENOM" id="CLU_012526_0_0_1"/>
<dbReference type="InParanoid" id="Q6W049"/>
<dbReference type="OMA" id="HETMLHE"/>
<dbReference type="OrthoDB" id="5969463at2759"/>
<dbReference type="PhylomeDB" id="Q6W049"/>
<dbReference type="TreeFam" id="TF344049"/>
<dbReference type="BioGRID-ORCS" id="259161">
    <property type="hits" value="2 hits in 66 CRISPR screens"/>
</dbReference>
<dbReference type="PRO" id="PR:Q6W049"/>
<dbReference type="Proteomes" id="UP000000589">
    <property type="component" value="Chromosome 7"/>
</dbReference>
<dbReference type="RNAct" id="Q6W049">
    <property type="molecule type" value="protein"/>
</dbReference>
<dbReference type="GO" id="GO:0016020">
    <property type="term" value="C:membrane"/>
    <property type="evidence" value="ECO:0000247"/>
    <property type="project" value="MGI"/>
</dbReference>
<dbReference type="GO" id="GO:0005886">
    <property type="term" value="C:plasma membrane"/>
    <property type="evidence" value="ECO:0007669"/>
    <property type="project" value="UniProtKB-SubCell"/>
</dbReference>
<dbReference type="GO" id="GO:0004930">
    <property type="term" value="F:G protein-coupled receptor activity"/>
    <property type="evidence" value="ECO:0007669"/>
    <property type="project" value="UniProtKB-KW"/>
</dbReference>
<dbReference type="GO" id="GO:0004984">
    <property type="term" value="F:olfactory receptor activity"/>
    <property type="evidence" value="ECO:0000247"/>
    <property type="project" value="MGI"/>
</dbReference>
<dbReference type="GO" id="GO:0007186">
    <property type="term" value="P:G protein-coupled receptor signaling pathway"/>
    <property type="evidence" value="ECO:0000247"/>
    <property type="project" value="MGI"/>
</dbReference>
<dbReference type="GO" id="GO:0007608">
    <property type="term" value="P:sensory perception of smell"/>
    <property type="evidence" value="ECO:0000247"/>
    <property type="project" value="MGI"/>
</dbReference>
<dbReference type="CDD" id="cd15223">
    <property type="entry name" value="7tmA_OR56-like"/>
    <property type="match status" value="1"/>
</dbReference>
<dbReference type="FunFam" id="1.20.1070.10:FF:000002">
    <property type="entry name" value="Olfactory receptor"/>
    <property type="match status" value="1"/>
</dbReference>
<dbReference type="Gene3D" id="1.20.1070.10">
    <property type="entry name" value="Rhodopsin 7-helix transmembrane proteins"/>
    <property type="match status" value="1"/>
</dbReference>
<dbReference type="InterPro" id="IPR000276">
    <property type="entry name" value="GPCR_Rhodpsn"/>
</dbReference>
<dbReference type="InterPro" id="IPR017452">
    <property type="entry name" value="GPCR_Rhodpsn_7TM"/>
</dbReference>
<dbReference type="InterPro" id="IPR000725">
    <property type="entry name" value="Olfact_rcpt"/>
</dbReference>
<dbReference type="InterPro" id="IPR050402">
    <property type="entry name" value="OR51/52/56-like"/>
</dbReference>
<dbReference type="PANTHER" id="PTHR26450">
    <property type="entry name" value="OLFACTORY RECEPTOR 56B1-RELATED"/>
    <property type="match status" value="1"/>
</dbReference>
<dbReference type="PANTHER" id="PTHR26450:SF157">
    <property type="entry name" value="OLFACTORY RECEPTOR 56B34-RELATED"/>
    <property type="match status" value="1"/>
</dbReference>
<dbReference type="Pfam" id="PF13853">
    <property type="entry name" value="7tm_4"/>
    <property type="match status" value="1"/>
</dbReference>
<dbReference type="PRINTS" id="PR00237">
    <property type="entry name" value="GPCRRHODOPSN"/>
</dbReference>
<dbReference type="PRINTS" id="PR00245">
    <property type="entry name" value="OLFACTORYR"/>
</dbReference>
<dbReference type="SUPFAM" id="SSF81321">
    <property type="entry name" value="Family A G protein-coupled receptor-like"/>
    <property type="match status" value="1"/>
</dbReference>
<dbReference type="PROSITE" id="PS50262">
    <property type="entry name" value="G_PROTEIN_RECEP_F1_2"/>
    <property type="match status" value="1"/>
</dbReference>
<comment type="function">
    <text evidence="3 4">Odorant receptor.</text>
</comment>
<comment type="subcellular location">
    <subcellularLocation>
        <location evidence="4">Cell membrane</location>
        <topology evidence="1">Multi-pass membrane protein</topology>
    </subcellularLocation>
</comment>
<comment type="similarity">
    <text evidence="2">Belongs to the G-protein coupled receptor 1 family.</text>
</comment>
<comment type="sequence caution" evidence="4">
    <conflict type="erroneous gene model prediction">
        <sequence resource="EMBL-CDS" id="AAS99798"/>
    </conflict>
</comment>
<evidence type="ECO:0000255" key="1"/>
<evidence type="ECO:0000255" key="2">
    <source>
        <dbReference type="PROSITE-ProRule" id="PRU00521"/>
    </source>
</evidence>
<evidence type="ECO:0000303" key="3">
    <source>
    </source>
</evidence>
<evidence type="ECO:0000305" key="4"/>
<evidence type="ECO:0000312" key="5">
    <source>
        <dbReference type="EMBL" id="AAS99798.1"/>
    </source>
</evidence>
<evidence type="ECO:0000312" key="6">
    <source>
        <dbReference type="MGI" id="MGI:3030522"/>
    </source>
</evidence>
<sequence>MGTALHETNSSEVHVSEFILLGFPGIHEFQIWLSLPMALLYIVALGANLLILITIYLEPTLHQPMYQFLGILAAVDIGLATTSMPKILAILWFDAKTISLPECFAQIYAIHTFMCMESGVFLCMAIDRYVAICYPLQYPSIVTEAFVIKATLSMLLRNGLLTIPVPVLAAQRQYCSRNEIDHCLCSNLGVISLACDDITVNRFYQLALAWLVVGSDMILVYASYALIIRSVLRLNSTEAASKALSTCSSHLILIMFYYTAIVIVSVTHLAGRRVPLIPVLLNVMHIVIPPSLNPVVYALRTQELKVGFRKVFSLSEFVSRK</sequence>